<name>GLYC_BRSVC</name>
<evidence type="ECO:0000250" key="1">
    <source>
        <dbReference type="UniProtKB" id="P03423"/>
    </source>
</evidence>
<evidence type="ECO:0000250" key="2">
    <source>
        <dbReference type="UniProtKB" id="P20895"/>
    </source>
</evidence>
<evidence type="ECO:0000255" key="3"/>
<evidence type="ECO:0000256" key="4">
    <source>
        <dbReference type="SAM" id="MobiDB-lite"/>
    </source>
</evidence>
<evidence type="ECO:0000305" key="5"/>
<evidence type="ECO:0007829" key="6">
    <source>
        <dbReference type="PDB" id="1BRV"/>
    </source>
</evidence>
<protein>
    <recommendedName>
        <fullName>Major surface glycoprotein G</fullName>
    </recommendedName>
    <alternativeName>
        <fullName>Attachment glycoprotein G</fullName>
    </alternativeName>
    <alternativeName>
        <fullName>Membrane-bound glycoprotein</fullName>
        <shortName>mG</shortName>
    </alternativeName>
    <component>
        <recommendedName>
            <fullName evidence="2">Mature secreted glycoprotein G</fullName>
            <shortName evidence="2">Mature sG</shortName>
        </recommendedName>
    </component>
</protein>
<sequence>MSNHTHHLKFKTLKRAWKASKYFIVGLSCLYKFNLKSLVQTALSTLAMITLTSLVITAIIYISVGNAKAKPTSKPTIQQTQQPQNHTSPFFTEHNYKSTHTSIQSTTLSQLLNIDTTRGITYGHSTNETQNRKIKGQSTLPATRKPPINPSGSIPPENHQDHNNFQTLPYVPCSTCEGNLACLSLCHIETERAPSRAPTITLKKTPKPKTTKKPTKTTIHHRTSPETKLQPKNNTATPQQGILSSTEHHTNQSTTQI</sequence>
<accession>P22261</accession>
<keyword id="KW-0002">3D-structure</keyword>
<keyword id="KW-0024">Alternative initiation</keyword>
<keyword id="KW-1015">Disulfide bond</keyword>
<keyword id="KW-0325">Glycoprotein</keyword>
<keyword id="KW-1032">Host cell membrane</keyword>
<keyword id="KW-1043">Host membrane</keyword>
<keyword id="KW-0945">Host-virus interaction</keyword>
<keyword id="KW-0472">Membrane</keyword>
<keyword id="KW-0964">Secreted</keyword>
<keyword id="KW-0812">Transmembrane</keyword>
<keyword id="KW-1133">Transmembrane helix</keyword>
<keyword id="KW-1161">Viral attachment to host cell</keyword>
<keyword id="KW-0899">Viral immunoevasion</keyword>
<keyword id="KW-0946">Virion</keyword>
<keyword id="KW-1160">Virus entry into host cell</keyword>
<dbReference type="EMBL" id="M58307">
    <property type="protein sequence ID" value="AAA42810.1"/>
    <property type="molecule type" value="mRNA"/>
</dbReference>
<dbReference type="PIR" id="A36408">
    <property type="entry name" value="MGNZBR"/>
</dbReference>
<dbReference type="PDB" id="1BRV">
    <property type="method" value="NMR"/>
    <property type="chains" value="A=158-189"/>
</dbReference>
<dbReference type="PDBsum" id="1BRV"/>
<dbReference type="BMRB" id="P22261"/>
<dbReference type="SMR" id="P22261"/>
<dbReference type="GlyCosmos" id="P22261">
    <property type="glycosylation" value="13 sites, No reported glycans"/>
</dbReference>
<dbReference type="EvolutionaryTrace" id="P22261"/>
<dbReference type="GO" id="GO:0005576">
    <property type="term" value="C:extracellular region"/>
    <property type="evidence" value="ECO:0007669"/>
    <property type="project" value="UniProtKB-SubCell"/>
</dbReference>
<dbReference type="GO" id="GO:0020002">
    <property type="term" value="C:host cell plasma membrane"/>
    <property type="evidence" value="ECO:0007669"/>
    <property type="project" value="UniProtKB-SubCell"/>
</dbReference>
<dbReference type="GO" id="GO:0016020">
    <property type="term" value="C:membrane"/>
    <property type="evidence" value="ECO:0007669"/>
    <property type="project" value="UniProtKB-KW"/>
</dbReference>
<dbReference type="GO" id="GO:0055036">
    <property type="term" value="C:virion membrane"/>
    <property type="evidence" value="ECO:0007669"/>
    <property type="project" value="UniProtKB-SubCell"/>
</dbReference>
<dbReference type="GO" id="GO:0046718">
    <property type="term" value="P:symbiont entry into host cell"/>
    <property type="evidence" value="ECO:0007669"/>
    <property type="project" value="UniProtKB-KW"/>
</dbReference>
<dbReference type="GO" id="GO:0019062">
    <property type="term" value="P:virion attachment to host cell"/>
    <property type="evidence" value="ECO:0007669"/>
    <property type="project" value="UniProtKB-KW"/>
</dbReference>
<dbReference type="InterPro" id="IPR000925">
    <property type="entry name" value="G_prot"/>
</dbReference>
<dbReference type="Pfam" id="PF00802">
    <property type="entry name" value="Glycoprotein_G"/>
    <property type="match status" value="1"/>
</dbReference>
<comment type="function">
    <molecule>Isoform Membrane-bound glycoprotein G</molecule>
    <text evidence="1">Attaches the virion to the host cell membrane by interacting with heparan sulfate, initiating the infection. Unlike the other paramyxovirus attachment proteins, lacks both neuraminidase and hemagglutinating activities.</text>
</comment>
<comment type="function">
    <molecule>Isoform Secreted glycoprotein G</molecule>
    <text evidence="1">Helps the virus escape antibody-dependent restriction of replication by acting as an antigen decoy and by modulating the activity of leukocytes bearing Fc-gamma receptors.</text>
</comment>
<comment type="subunit">
    <molecule>Isoform Membrane-bound glycoprotein G</molecule>
    <text evidence="1">Homooligomer. Interacts (via N-terminus) with protein M. Part of a complex composed of F1, F2 and G glycoproteins. Interacts with protein SH. Interacts with host heparate sulfate; this interaction probably participates in the viral attachment to the host cell.</text>
</comment>
<comment type="subcellular location">
    <molecule>Isoform Membrane-bound glycoprotein G</molecule>
    <subcellularLocation>
        <location evidence="1">Virion membrane</location>
        <topology evidence="1">Single-pass type II membrane protein</topology>
    </subcellularLocation>
    <subcellularLocation>
        <location evidence="1">Host cell membrane</location>
        <topology evidence="1">Single-pass type II membrane protein</topology>
    </subcellularLocation>
</comment>
<comment type="subcellular location">
    <molecule>Isoform Secreted glycoprotein G</molecule>
    <subcellularLocation>
        <location evidence="2">Secreted</location>
    </subcellularLocation>
    <text evidence="2">The protein is shed from infected cells before the appearance of progeny virus. The initiation at the downstream methionine removes a portion of the transmembrane domain. The remaining hydrophobic portion of the sG protein is essential for translocating it into the lumen of the ER during translation and would likely maintain its membrane association until a proteolytic event releases the mature sG protein into the medium.</text>
</comment>
<comment type="alternative products">
    <event type="alternative initiation"/>
    <isoform>
        <id>P22261-1</id>
        <name>Membrane-bound glycoprotein G</name>
        <sequence type="displayed"/>
    </isoform>
    <isoform>
        <id>P22261-2</id>
        <name>Secreted glycoprotein G</name>
        <sequence type="described" ref="VSP_036516"/>
    </isoform>
</comment>
<comment type="domain">
    <molecule>Isoform Membrane-bound glycoprotein G</molecule>
    <text evidence="1">Contains a linear heparin binding domain essential for virus attachment to the host.</text>
</comment>
<comment type="PTM">
    <molecule>Isoform Secreted glycoprotein G</molecule>
    <text evidence="2">Cleaved to give rise to the mature sG protein which lacks the transmembrane domain.</text>
</comment>
<comment type="PTM">
    <molecule>Isoform Membrane-bound glycoprotein G</molecule>
    <text evidence="1">N- and O-glycosylated. May carry 30-40 separate O-linked carbohydrate chains distributed among the serine and threonine residues.</text>
</comment>
<comment type="PTM">
    <molecule>Isoform Membrane-bound glycoprotein G</molecule>
    <text evidence="1">Palmitoylated.</text>
</comment>
<comment type="similarity">
    <text evidence="5">Belongs to the pneumoviruses glycoprotein G family.</text>
</comment>
<proteinExistence type="evidence at protein level"/>
<organism>
    <name type="scientific">Bovine respiratory syncytial virus (strain Copenhagen)</name>
    <name type="common">BRS</name>
    <dbReference type="NCBI Taxonomy" id="11248"/>
    <lineage>
        <taxon>Viruses</taxon>
        <taxon>Riboviria</taxon>
        <taxon>Orthornavirae</taxon>
        <taxon>Negarnaviricota</taxon>
        <taxon>Haploviricotina</taxon>
        <taxon>Monjiviricetes</taxon>
        <taxon>Mononegavirales</taxon>
        <taxon>Pneumoviridae</taxon>
        <taxon>Orthopneumovirus</taxon>
        <taxon>Orthopneumovirus bovis</taxon>
    </lineage>
</organism>
<gene>
    <name type="primary">G</name>
</gene>
<reference key="1">
    <citation type="journal article" date="1990" name="J. Virol.">
        <title>Nucleotide sequence analysis and expression from recombinant vectors demonstrate that the attachment protein G of bovine respiratory syncytial virus is distinct from that of human respiratory syncytial virus.</title>
        <authorList>
            <person name="Lerch R.A."/>
            <person name="Anderson K."/>
            <person name="Wertz G.W."/>
        </authorList>
    </citation>
    <scope>NUCLEOTIDE SEQUENCE [MRNA]</scope>
</reference>
<reference key="2">
    <citation type="journal article" date="1996" name="Biochemistry">
        <title>Solution structure of the immunodominant region of protein G of bovine respiratory syncytial virus.</title>
        <authorList>
            <person name="Doreleijers J.F."/>
            <person name="Langedijk J.P.M."/>
            <person name="Haard K."/>
            <person name="Boelens R."/>
            <person name="Rullmann J.A."/>
            <person name="Schaaper W.M."/>
            <person name="van Oirschot J.T."/>
            <person name="Kaptein R."/>
        </authorList>
    </citation>
    <scope>STRUCTURE BY NMR OF 158-189</scope>
    <source>
        <strain>391-2</strain>
    </source>
</reference>
<organismHost>
    <name type="scientific">Bos taurus</name>
    <name type="common">Bovine</name>
    <dbReference type="NCBI Taxonomy" id="9913"/>
</organismHost>
<feature type="chain" id="PRO_0000142848" description="Major surface glycoprotein G">
    <location>
        <begin position="1"/>
        <end position="257"/>
    </location>
</feature>
<feature type="chain" id="PRO_0000451317" description="Mature secreted glycoprotein G">
    <location>
        <begin position="66"/>
        <end position="257"/>
    </location>
</feature>
<feature type="topological domain" description="Cytoplasmic" evidence="3">
    <location>
        <begin position="1"/>
        <end position="37"/>
    </location>
</feature>
<feature type="transmembrane region" description="Helical" evidence="3">
    <location>
        <begin position="38"/>
        <end position="66"/>
    </location>
</feature>
<feature type="topological domain" description="Extracellular" evidence="3">
    <location>
        <begin position="67"/>
        <end position="257"/>
    </location>
</feature>
<feature type="region of interest" description="Disordered" evidence="4">
    <location>
        <begin position="71"/>
        <end position="93"/>
    </location>
</feature>
<feature type="region of interest" description="Disordered" evidence="4">
    <location>
        <begin position="122"/>
        <end position="161"/>
    </location>
</feature>
<feature type="region of interest" description="Binding to host heparan sulfate" evidence="1">
    <location>
        <begin position="187"/>
        <end position="198"/>
    </location>
</feature>
<feature type="region of interest" description="Disordered" evidence="4">
    <location>
        <begin position="197"/>
        <end position="257"/>
    </location>
</feature>
<feature type="compositionally biased region" description="Polar residues" evidence="4">
    <location>
        <begin position="73"/>
        <end position="90"/>
    </location>
</feature>
<feature type="compositionally biased region" description="Basic residues" evidence="4">
    <location>
        <begin position="204"/>
        <end position="222"/>
    </location>
</feature>
<feature type="compositionally biased region" description="Polar residues" evidence="4">
    <location>
        <begin position="226"/>
        <end position="257"/>
    </location>
</feature>
<feature type="site" description="Cleavage" evidence="1">
    <location>
        <begin position="65"/>
        <end position="66"/>
    </location>
</feature>
<feature type="glycosylation site" description="O-linked (GalNAc...) threonine; by host" evidence="1">
    <location>
        <position position="72"/>
    </location>
</feature>
<feature type="glycosylation site" description="O-linked (GalNAc...) threonine; by host" evidence="1">
    <location>
        <position position="80"/>
    </location>
</feature>
<feature type="glycosylation site" description="N-linked (GlcNAc...) asparagine; by host" evidence="3">
    <location>
        <position position="85"/>
    </location>
</feature>
<feature type="glycosylation site" description="O-linked (GalNAc...) threonine; by host" evidence="1">
    <location>
        <position position="87"/>
    </location>
</feature>
<feature type="glycosylation site" description="O-linked (GalNAc...) threonine; by host" evidence="1">
    <location>
        <position position="92"/>
    </location>
</feature>
<feature type="glycosylation site" description="O-linked (GalNAc...) serine; by host" evidence="3">
    <location>
        <position position="105"/>
    </location>
</feature>
<feature type="glycosylation site" description="N-linked (GlcNAc...) asparagine; by host" evidence="3">
    <location>
        <position position="127"/>
    </location>
</feature>
<feature type="glycosylation site" description="O-linked (GalNAc...) threonine; by host" evidence="3">
    <location>
        <position position="139"/>
    </location>
</feature>
<feature type="glycosylation site" description="O-linked (GalNAc...) threonine; by host" evidence="3">
    <location>
        <position position="199"/>
    </location>
</feature>
<feature type="glycosylation site" description="O-linked (GalNAc...) threonine; by host" evidence="3">
    <location>
        <position position="215"/>
    </location>
</feature>
<feature type="glycosylation site" description="N-linked (GlcNAc...) asparagine; by host" evidence="3">
    <location>
        <position position="233"/>
    </location>
</feature>
<feature type="glycosylation site" description="N-linked (GlcNAc...) asparagine; by host" evidence="3">
    <location>
        <position position="251"/>
    </location>
</feature>
<feature type="glycosylation site" description="O-linked (GalNAc...) serine; by host" evidence="3">
    <location>
        <position position="253"/>
    </location>
</feature>
<feature type="disulfide bond" evidence="1">
    <location>
        <begin position="173"/>
        <end position="186"/>
    </location>
</feature>
<feature type="disulfide bond" evidence="1">
    <location>
        <begin position="176"/>
        <end position="182"/>
    </location>
</feature>
<feature type="splice variant" id="VSP_036516" description="In isoform Secreted glycoprotein G." evidence="1">
    <location>
        <begin position="1"/>
        <end position="47"/>
    </location>
</feature>
<feature type="helix" evidence="6">
    <location>
        <begin position="173"/>
        <end position="176"/>
    </location>
</feature>
<feature type="helix" evidence="6">
    <location>
        <begin position="180"/>
        <end position="185"/>
    </location>
</feature>